<proteinExistence type="inferred from homology"/>
<comment type="function">
    <text evidence="1">A probable RNA chaperone. Forms a complex with KhpA which binds to cellular RNA and controls its expression. Plays a role in peptidoglycan (PG) homeostasis and cell length regulation.</text>
</comment>
<comment type="subunit">
    <text evidence="1">Forms a complex with KhpA.</text>
</comment>
<comment type="subcellular location">
    <subcellularLocation>
        <location evidence="1">Cytoplasm</location>
    </subcellularLocation>
</comment>
<comment type="domain">
    <text evidence="1">Has an N-terminal Jag-N domain and 2 RNA-binding domains (KH and R3H).</text>
</comment>
<comment type="similarity">
    <text evidence="1">Belongs to the KhpB RNA-binding protein family.</text>
</comment>
<keyword id="KW-0133">Cell shape</keyword>
<keyword id="KW-0961">Cell wall biogenesis/degradation</keyword>
<keyword id="KW-0143">Chaperone</keyword>
<keyword id="KW-0963">Cytoplasm</keyword>
<keyword id="KW-1185">Reference proteome</keyword>
<keyword id="KW-0694">RNA-binding</keyword>
<reference key="1">
    <citation type="journal article" date="1992" name="J. Gen. Microbiol.">
        <title>Structure and function of the spoIIIJ gene of Bacillus subtilis: a vegetatively expressed gene that is essential for sigma G activity at an intermediate stage of sporulation.</title>
        <authorList>
            <person name="Errington J."/>
            <person name="Appleby L."/>
            <person name="Daniel R.A."/>
            <person name="Goodfellow H."/>
            <person name="Partridge S.R."/>
            <person name="Yudkin M.D."/>
        </authorList>
    </citation>
    <scope>NUCLEOTIDE SEQUENCE [GENOMIC DNA]</scope>
    <source>
        <strain>168</strain>
    </source>
</reference>
<reference key="2">
    <citation type="journal article" date="1992" name="Mol. Microbiol.">
        <title>Genes and their organization in the replication origin region of the bacterial chromosome.</title>
        <authorList>
            <person name="Ogasawara N."/>
            <person name="Yoshikawa H."/>
        </authorList>
    </citation>
    <scope>NUCLEOTIDE SEQUENCE [GENOMIC DNA]</scope>
    <source>
        <strain>168 / CRK2000</strain>
    </source>
</reference>
<reference key="3">
    <citation type="journal article" date="1994" name="DNA Res.">
        <title>Systematic sequencing of the 180 kilobase region of the Bacillus subtilis chromosome containing the replication origin.</title>
        <authorList>
            <person name="Ogasawara N."/>
            <person name="Nakai S."/>
            <person name="Yoshikawa H."/>
        </authorList>
    </citation>
    <scope>NUCLEOTIDE SEQUENCE [GENOMIC DNA]</scope>
    <source>
        <strain>168</strain>
    </source>
</reference>
<reference key="4">
    <citation type="journal article" date="1997" name="Nature">
        <title>The complete genome sequence of the Gram-positive bacterium Bacillus subtilis.</title>
        <authorList>
            <person name="Kunst F."/>
            <person name="Ogasawara N."/>
            <person name="Moszer I."/>
            <person name="Albertini A.M."/>
            <person name="Alloni G."/>
            <person name="Azevedo V."/>
            <person name="Bertero M.G."/>
            <person name="Bessieres P."/>
            <person name="Bolotin A."/>
            <person name="Borchert S."/>
            <person name="Borriss R."/>
            <person name="Boursier L."/>
            <person name="Brans A."/>
            <person name="Braun M."/>
            <person name="Brignell S.C."/>
            <person name="Bron S."/>
            <person name="Brouillet S."/>
            <person name="Bruschi C.V."/>
            <person name="Caldwell B."/>
            <person name="Capuano V."/>
            <person name="Carter N.M."/>
            <person name="Choi S.-K."/>
            <person name="Codani J.-J."/>
            <person name="Connerton I.F."/>
            <person name="Cummings N.J."/>
            <person name="Daniel R.A."/>
            <person name="Denizot F."/>
            <person name="Devine K.M."/>
            <person name="Duesterhoeft A."/>
            <person name="Ehrlich S.D."/>
            <person name="Emmerson P.T."/>
            <person name="Entian K.-D."/>
            <person name="Errington J."/>
            <person name="Fabret C."/>
            <person name="Ferrari E."/>
            <person name="Foulger D."/>
            <person name="Fritz C."/>
            <person name="Fujita M."/>
            <person name="Fujita Y."/>
            <person name="Fuma S."/>
            <person name="Galizzi A."/>
            <person name="Galleron N."/>
            <person name="Ghim S.-Y."/>
            <person name="Glaser P."/>
            <person name="Goffeau A."/>
            <person name="Golightly E.J."/>
            <person name="Grandi G."/>
            <person name="Guiseppi G."/>
            <person name="Guy B.J."/>
            <person name="Haga K."/>
            <person name="Haiech J."/>
            <person name="Harwood C.R."/>
            <person name="Henaut A."/>
            <person name="Hilbert H."/>
            <person name="Holsappel S."/>
            <person name="Hosono S."/>
            <person name="Hullo M.-F."/>
            <person name="Itaya M."/>
            <person name="Jones L.-M."/>
            <person name="Joris B."/>
            <person name="Karamata D."/>
            <person name="Kasahara Y."/>
            <person name="Klaerr-Blanchard M."/>
            <person name="Klein C."/>
            <person name="Kobayashi Y."/>
            <person name="Koetter P."/>
            <person name="Koningstein G."/>
            <person name="Krogh S."/>
            <person name="Kumano M."/>
            <person name="Kurita K."/>
            <person name="Lapidus A."/>
            <person name="Lardinois S."/>
            <person name="Lauber J."/>
            <person name="Lazarevic V."/>
            <person name="Lee S.-M."/>
            <person name="Levine A."/>
            <person name="Liu H."/>
            <person name="Masuda S."/>
            <person name="Mauel C."/>
            <person name="Medigue C."/>
            <person name="Medina N."/>
            <person name="Mellado R.P."/>
            <person name="Mizuno M."/>
            <person name="Moestl D."/>
            <person name="Nakai S."/>
            <person name="Noback M."/>
            <person name="Noone D."/>
            <person name="O'Reilly M."/>
            <person name="Ogawa K."/>
            <person name="Ogiwara A."/>
            <person name="Oudega B."/>
            <person name="Park S.-H."/>
            <person name="Parro V."/>
            <person name="Pohl T.M."/>
            <person name="Portetelle D."/>
            <person name="Porwollik S."/>
            <person name="Prescott A.M."/>
            <person name="Presecan E."/>
            <person name="Pujic P."/>
            <person name="Purnelle B."/>
            <person name="Rapoport G."/>
            <person name="Rey M."/>
            <person name="Reynolds S."/>
            <person name="Rieger M."/>
            <person name="Rivolta C."/>
            <person name="Rocha E."/>
            <person name="Roche B."/>
            <person name="Rose M."/>
            <person name="Sadaie Y."/>
            <person name="Sato T."/>
            <person name="Scanlan E."/>
            <person name="Schleich S."/>
            <person name="Schroeter R."/>
            <person name="Scoffone F."/>
            <person name="Sekiguchi J."/>
            <person name="Sekowska A."/>
            <person name="Seror S.J."/>
            <person name="Serror P."/>
            <person name="Shin B.-S."/>
            <person name="Soldo B."/>
            <person name="Sorokin A."/>
            <person name="Tacconi E."/>
            <person name="Takagi T."/>
            <person name="Takahashi H."/>
            <person name="Takemaru K."/>
            <person name="Takeuchi M."/>
            <person name="Tamakoshi A."/>
            <person name="Tanaka T."/>
            <person name="Terpstra P."/>
            <person name="Tognoni A."/>
            <person name="Tosato V."/>
            <person name="Uchiyama S."/>
            <person name="Vandenbol M."/>
            <person name="Vannier F."/>
            <person name="Vassarotti A."/>
            <person name="Viari A."/>
            <person name="Wambutt R."/>
            <person name="Wedler E."/>
            <person name="Wedler H."/>
            <person name="Weitzenegger T."/>
            <person name="Winters P."/>
            <person name="Wipat A."/>
            <person name="Yamamoto H."/>
            <person name="Yamane K."/>
            <person name="Yasumoto K."/>
            <person name="Yata K."/>
            <person name="Yoshida K."/>
            <person name="Yoshikawa H.-F."/>
            <person name="Zumstein E."/>
            <person name="Yoshikawa H."/>
            <person name="Danchin A."/>
        </authorList>
    </citation>
    <scope>NUCLEOTIDE SEQUENCE [LARGE SCALE GENOMIC DNA]</scope>
    <source>
        <strain>168</strain>
    </source>
</reference>
<dbReference type="EMBL" id="Z14225">
    <property type="protein sequence ID" value="CAA78596.1"/>
    <property type="molecule type" value="Genomic_DNA"/>
</dbReference>
<dbReference type="EMBL" id="X62539">
    <property type="protein sequence ID" value="CAA44402.1"/>
    <property type="molecule type" value="Genomic_DNA"/>
</dbReference>
<dbReference type="EMBL" id="D26185">
    <property type="protein sequence ID" value="BAA05233.1"/>
    <property type="molecule type" value="Genomic_DNA"/>
</dbReference>
<dbReference type="EMBL" id="AL009126">
    <property type="protein sequence ID" value="CAB16140.1"/>
    <property type="molecule type" value="Genomic_DNA"/>
</dbReference>
<dbReference type="PIR" id="I40438">
    <property type="entry name" value="I40438"/>
</dbReference>
<dbReference type="RefSeq" id="NP_391983.1">
    <property type="nucleotide sequence ID" value="NC_000964.3"/>
</dbReference>
<dbReference type="RefSeq" id="WP_003243764.1">
    <property type="nucleotide sequence ID" value="NZ_OZ025638.1"/>
</dbReference>
<dbReference type="SMR" id="Q01620"/>
<dbReference type="FunCoup" id="Q01620">
    <property type="interactions" value="176"/>
</dbReference>
<dbReference type="STRING" id="224308.BSU41030"/>
<dbReference type="PaxDb" id="224308-BSU41030"/>
<dbReference type="EnsemblBacteria" id="CAB16140">
    <property type="protein sequence ID" value="CAB16140"/>
    <property type="gene ID" value="BSU_41030"/>
</dbReference>
<dbReference type="GeneID" id="937933"/>
<dbReference type="KEGG" id="bsu:BSU41030"/>
<dbReference type="PATRIC" id="fig|224308.179.peg.4445"/>
<dbReference type="eggNOG" id="COG1847">
    <property type="taxonomic scope" value="Bacteria"/>
</dbReference>
<dbReference type="InParanoid" id="Q01620"/>
<dbReference type="OrthoDB" id="9794483at2"/>
<dbReference type="PhylomeDB" id="Q01620"/>
<dbReference type="BioCyc" id="BSUB:BSU41030-MONOMER"/>
<dbReference type="Proteomes" id="UP000001570">
    <property type="component" value="Chromosome"/>
</dbReference>
<dbReference type="GO" id="GO:0005737">
    <property type="term" value="C:cytoplasm"/>
    <property type="evidence" value="ECO:0007669"/>
    <property type="project" value="UniProtKB-SubCell"/>
</dbReference>
<dbReference type="GO" id="GO:0003723">
    <property type="term" value="F:RNA binding"/>
    <property type="evidence" value="ECO:0007669"/>
    <property type="project" value="UniProtKB-UniRule"/>
</dbReference>
<dbReference type="GO" id="GO:0071555">
    <property type="term" value="P:cell wall organization"/>
    <property type="evidence" value="ECO:0007669"/>
    <property type="project" value="UniProtKB-KW"/>
</dbReference>
<dbReference type="GO" id="GO:0009252">
    <property type="term" value="P:peptidoglycan biosynthetic process"/>
    <property type="evidence" value="ECO:0007669"/>
    <property type="project" value="UniProtKB-UniRule"/>
</dbReference>
<dbReference type="GO" id="GO:0008360">
    <property type="term" value="P:regulation of cell shape"/>
    <property type="evidence" value="ECO:0007669"/>
    <property type="project" value="UniProtKB-KW"/>
</dbReference>
<dbReference type="CDD" id="cd02414">
    <property type="entry name" value="KH-II_Jag"/>
    <property type="match status" value="1"/>
</dbReference>
<dbReference type="CDD" id="cd02644">
    <property type="entry name" value="R3H_jag"/>
    <property type="match status" value="1"/>
</dbReference>
<dbReference type="Gene3D" id="3.30.300.20">
    <property type="match status" value="1"/>
</dbReference>
<dbReference type="Gene3D" id="3.30.30.80">
    <property type="entry name" value="probable RNA-binding protein from clostridium symbiosum atcc 14940"/>
    <property type="match status" value="1"/>
</dbReference>
<dbReference type="Gene3D" id="3.30.1370.50">
    <property type="entry name" value="R3H-like domain"/>
    <property type="match status" value="1"/>
</dbReference>
<dbReference type="HAMAP" id="MF_00867">
    <property type="entry name" value="KhpB"/>
    <property type="match status" value="1"/>
</dbReference>
<dbReference type="InterPro" id="IPR038008">
    <property type="entry name" value="Jag_KH"/>
</dbReference>
<dbReference type="InterPro" id="IPR038247">
    <property type="entry name" value="Jag_N_dom_sf"/>
</dbReference>
<dbReference type="InterPro" id="IPR004087">
    <property type="entry name" value="KH_dom"/>
</dbReference>
<dbReference type="InterPro" id="IPR015946">
    <property type="entry name" value="KH_dom-like_a/b"/>
</dbReference>
<dbReference type="InterPro" id="IPR039247">
    <property type="entry name" value="KhpB"/>
</dbReference>
<dbReference type="InterPro" id="IPR032782">
    <property type="entry name" value="KhpB_N"/>
</dbReference>
<dbReference type="InterPro" id="IPR001374">
    <property type="entry name" value="R3H_dom"/>
</dbReference>
<dbReference type="InterPro" id="IPR036867">
    <property type="entry name" value="R3H_dom_sf"/>
</dbReference>
<dbReference type="InterPro" id="IPR034079">
    <property type="entry name" value="R3H_KhpB"/>
</dbReference>
<dbReference type="NCBIfam" id="NF041568">
    <property type="entry name" value="Jag_EloR"/>
    <property type="match status" value="1"/>
</dbReference>
<dbReference type="PANTHER" id="PTHR35800">
    <property type="entry name" value="PROTEIN JAG"/>
    <property type="match status" value="1"/>
</dbReference>
<dbReference type="PANTHER" id="PTHR35800:SF1">
    <property type="entry name" value="RNA-BINDING PROTEIN KHPB"/>
    <property type="match status" value="1"/>
</dbReference>
<dbReference type="Pfam" id="PF14804">
    <property type="entry name" value="Jag_N"/>
    <property type="match status" value="1"/>
</dbReference>
<dbReference type="Pfam" id="PF13083">
    <property type="entry name" value="KH_KhpA-B"/>
    <property type="match status" value="1"/>
</dbReference>
<dbReference type="Pfam" id="PF01424">
    <property type="entry name" value="R3H"/>
    <property type="match status" value="1"/>
</dbReference>
<dbReference type="SMART" id="SM01245">
    <property type="entry name" value="Jag_N"/>
    <property type="match status" value="1"/>
</dbReference>
<dbReference type="SMART" id="SM00322">
    <property type="entry name" value="KH"/>
    <property type="match status" value="1"/>
</dbReference>
<dbReference type="SMART" id="SM00393">
    <property type="entry name" value="R3H"/>
    <property type="match status" value="1"/>
</dbReference>
<dbReference type="SUPFAM" id="SSF82708">
    <property type="entry name" value="R3H domain"/>
    <property type="match status" value="1"/>
</dbReference>
<dbReference type="PROSITE" id="PS51061">
    <property type="entry name" value="R3H"/>
    <property type="match status" value="1"/>
</dbReference>
<feature type="chain" id="PRO_0000084279" description="RNA-binding protein KhpB">
    <location>
        <begin position="1"/>
        <end position="208"/>
    </location>
</feature>
<feature type="domain" description="KH" evidence="1">
    <location>
        <begin position="58"/>
        <end position="135"/>
    </location>
</feature>
<feature type="domain" description="R3H" evidence="1">
    <location>
        <begin position="140"/>
        <end position="208"/>
    </location>
</feature>
<feature type="region of interest" description="Jag_N domain" evidence="1">
    <location>
        <begin position="5"/>
        <end position="55"/>
    </location>
</feature>
<name>KHPB_BACSU</name>
<accession>Q01620</accession>
<organism>
    <name type="scientific">Bacillus subtilis (strain 168)</name>
    <dbReference type="NCBI Taxonomy" id="224308"/>
    <lineage>
        <taxon>Bacteria</taxon>
        <taxon>Bacillati</taxon>
        <taxon>Bacillota</taxon>
        <taxon>Bacilli</taxon>
        <taxon>Bacillales</taxon>
        <taxon>Bacillaceae</taxon>
        <taxon>Bacillus</taxon>
    </lineage>
</organism>
<protein>
    <recommendedName>
        <fullName evidence="1">RNA-binding protein KhpB</fullName>
    </recommendedName>
    <alternativeName>
        <fullName evidence="1">RNA-binding protein EloR</fullName>
    </alternativeName>
</protein>
<gene>
    <name evidence="1" type="primary">khpB</name>
    <name evidence="1" type="synonym">eloR</name>
    <name evidence="2" type="synonym">jag</name>
    <name type="ordered locus">BSU41030</name>
</gene>
<sequence>MRNVTAAGRNVDEAVQSGLQELGLTKDKVEITVIEEGNKGFLGIFGKKPAIVKLVEKIDPIQQAKLYLQTIAEAIAGKSDVTVQESKKTVRYHITGEKAALLIGKRGQTLNALETLTQLALNRYPGQYKNVTVDAENYRLKRKETLSQLAIKLADQVLKTKKSIQLEPMPSSERKIIHDTLSGYANHQIKTYSMGEGENRHLVISHKR</sequence>
<evidence type="ECO:0000255" key="1">
    <source>
        <dbReference type="HAMAP-Rule" id="MF_00867"/>
    </source>
</evidence>
<evidence type="ECO:0000303" key="2">
    <source>
    </source>
</evidence>